<accession>Q0VRM0</accession>
<comment type="catalytic activity">
    <reaction evidence="1">
        <text>sulfate + ATP + H(+) = adenosine 5'-phosphosulfate + diphosphate</text>
        <dbReference type="Rhea" id="RHEA:18133"/>
        <dbReference type="ChEBI" id="CHEBI:15378"/>
        <dbReference type="ChEBI" id="CHEBI:16189"/>
        <dbReference type="ChEBI" id="CHEBI:30616"/>
        <dbReference type="ChEBI" id="CHEBI:33019"/>
        <dbReference type="ChEBI" id="CHEBI:58243"/>
        <dbReference type="EC" id="2.7.7.4"/>
    </reaction>
</comment>
<comment type="pathway">
    <text evidence="1">Sulfur metabolism; hydrogen sulfide biosynthesis; sulfite from sulfate: step 1/3.</text>
</comment>
<comment type="similarity">
    <text evidence="1">Belongs to the sulfate adenylyltransferase family.</text>
</comment>
<gene>
    <name evidence="1" type="primary">sat</name>
    <name type="ordered locus">ABO_0730</name>
</gene>
<dbReference type="EC" id="2.7.7.4" evidence="1"/>
<dbReference type="EMBL" id="AM286690">
    <property type="protein sequence ID" value="CAL16178.1"/>
    <property type="molecule type" value="Genomic_DNA"/>
</dbReference>
<dbReference type="SMR" id="Q0VRM0"/>
<dbReference type="STRING" id="393595.ABO_0730"/>
<dbReference type="KEGG" id="abo:ABO_0730"/>
<dbReference type="eggNOG" id="COG2046">
    <property type="taxonomic scope" value="Bacteria"/>
</dbReference>
<dbReference type="HOGENOM" id="CLU_022950_1_1_6"/>
<dbReference type="UniPathway" id="UPA00140">
    <property type="reaction ID" value="UER00204"/>
</dbReference>
<dbReference type="Proteomes" id="UP000008871">
    <property type="component" value="Chromosome"/>
</dbReference>
<dbReference type="GO" id="GO:0005524">
    <property type="term" value="F:ATP binding"/>
    <property type="evidence" value="ECO:0007669"/>
    <property type="project" value="UniProtKB-KW"/>
</dbReference>
<dbReference type="GO" id="GO:0004781">
    <property type="term" value="F:sulfate adenylyltransferase (ATP) activity"/>
    <property type="evidence" value="ECO:0007669"/>
    <property type="project" value="UniProtKB-UniRule"/>
</dbReference>
<dbReference type="GO" id="GO:0070814">
    <property type="term" value="P:hydrogen sulfide biosynthetic process"/>
    <property type="evidence" value="ECO:0007669"/>
    <property type="project" value="UniProtKB-UniRule"/>
</dbReference>
<dbReference type="GO" id="GO:0000103">
    <property type="term" value="P:sulfate assimilation"/>
    <property type="evidence" value="ECO:0007669"/>
    <property type="project" value="UniProtKB-UniRule"/>
</dbReference>
<dbReference type="CDD" id="cd00517">
    <property type="entry name" value="ATPS"/>
    <property type="match status" value="1"/>
</dbReference>
<dbReference type="Gene3D" id="3.40.50.620">
    <property type="entry name" value="HUPs"/>
    <property type="match status" value="1"/>
</dbReference>
<dbReference type="Gene3D" id="3.10.400.10">
    <property type="entry name" value="Sulfate adenylyltransferase"/>
    <property type="match status" value="1"/>
</dbReference>
<dbReference type="HAMAP" id="MF_00066">
    <property type="entry name" value="Sulf_adenylyltr"/>
    <property type="match status" value="1"/>
</dbReference>
<dbReference type="InterPro" id="IPR025980">
    <property type="entry name" value="ATP-Sase_PUA-like_dom"/>
</dbReference>
<dbReference type="InterPro" id="IPR015947">
    <property type="entry name" value="PUA-like_sf"/>
</dbReference>
<dbReference type="InterPro" id="IPR014729">
    <property type="entry name" value="Rossmann-like_a/b/a_fold"/>
</dbReference>
<dbReference type="InterPro" id="IPR020792">
    <property type="entry name" value="SO4_adenylyltransferase_pro"/>
</dbReference>
<dbReference type="InterPro" id="IPR024951">
    <property type="entry name" value="Sulfurylase_cat_dom"/>
</dbReference>
<dbReference type="InterPro" id="IPR002650">
    <property type="entry name" value="Sulphate_adenylyltransferase"/>
</dbReference>
<dbReference type="NCBIfam" id="NF003166">
    <property type="entry name" value="PRK04149.1"/>
    <property type="match status" value="1"/>
</dbReference>
<dbReference type="NCBIfam" id="TIGR00339">
    <property type="entry name" value="sopT"/>
    <property type="match status" value="1"/>
</dbReference>
<dbReference type="PANTHER" id="PTHR43509">
    <property type="match status" value="1"/>
</dbReference>
<dbReference type="PANTHER" id="PTHR43509:SF1">
    <property type="entry name" value="SULFATE ADENYLYLTRANSFERASE"/>
    <property type="match status" value="1"/>
</dbReference>
<dbReference type="Pfam" id="PF01747">
    <property type="entry name" value="ATP-sulfurylase"/>
    <property type="match status" value="1"/>
</dbReference>
<dbReference type="Pfam" id="PF14306">
    <property type="entry name" value="PUA_2"/>
    <property type="match status" value="1"/>
</dbReference>
<dbReference type="SUPFAM" id="SSF52374">
    <property type="entry name" value="Nucleotidylyl transferase"/>
    <property type="match status" value="1"/>
</dbReference>
<dbReference type="SUPFAM" id="SSF88697">
    <property type="entry name" value="PUA domain-like"/>
    <property type="match status" value="1"/>
</dbReference>
<organism>
    <name type="scientific">Alcanivorax borkumensis (strain ATCC 700651 / DSM 11573 / NCIMB 13689 / SK2)</name>
    <dbReference type="NCBI Taxonomy" id="393595"/>
    <lineage>
        <taxon>Bacteria</taxon>
        <taxon>Pseudomonadati</taxon>
        <taxon>Pseudomonadota</taxon>
        <taxon>Gammaproteobacteria</taxon>
        <taxon>Oceanospirillales</taxon>
        <taxon>Alcanivoracaceae</taxon>
        <taxon>Alcanivorax</taxon>
    </lineage>
</organism>
<sequence>MVALVKPHGADELTPLYVADEDARVALQREAETLPSVVISSSAAANAVMMAAGYFTPLTGYMNKADMLSVADNLTTADGLFWPVPILNMLKDVSAIAGAKRIALRDPNVEGEPVIAVMDVAAIEEATDAELEAVAEKVFSTTDKQHPGVANFLAAGNFIVSGDIQVLNYSYFADDFPDTFRTAVSIRNEFVERGWNNVVAFQTRNPMHRAHEELCRMAQEALNADGILIHMLLGKLKAGDIPADVRDASIRKMVDVYFPPNTVMITGYGFDMLYAGPREAVLHAVFRQNCGCSHLIVGRDHAGVGDYYGAFDAQTIFQEKVPAGALEIKIFEADHTAYSKKLDRVVMMRDVPDHTKDDFVLLSGTKVREMLGQGIAPPPEFSRPEVAQILMDYYQALDAGK</sequence>
<keyword id="KW-0067">ATP-binding</keyword>
<keyword id="KW-0547">Nucleotide-binding</keyword>
<keyword id="KW-0548">Nucleotidyltransferase</keyword>
<keyword id="KW-1185">Reference proteome</keyword>
<keyword id="KW-0808">Transferase</keyword>
<protein>
    <recommendedName>
        <fullName evidence="1">Sulfate adenylyltransferase</fullName>
        <ecNumber evidence="1">2.7.7.4</ecNumber>
    </recommendedName>
    <alternativeName>
        <fullName evidence="1">ATP-sulfurylase</fullName>
    </alternativeName>
    <alternativeName>
        <fullName evidence="1">Sulfate adenylate transferase</fullName>
        <shortName evidence="1">SAT</shortName>
    </alternativeName>
</protein>
<name>SAT_ALCBS</name>
<evidence type="ECO:0000255" key="1">
    <source>
        <dbReference type="HAMAP-Rule" id="MF_00066"/>
    </source>
</evidence>
<reference key="1">
    <citation type="journal article" date="2006" name="Nat. Biotechnol.">
        <title>Genome sequence of the ubiquitous hydrocarbon-degrading marine bacterium Alcanivorax borkumensis.</title>
        <authorList>
            <person name="Schneiker S."/>
            <person name="Martins dos Santos V.A.P."/>
            <person name="Bartels D."/>
            <person name="Bekel T."/>
            <person name="Brecht M."/>
            <person name="Buhrmester J."/>
            <person name="Chernikova T.N."/>
            <person name="Denaro R."/>
            <person name="Ferrer M."/>
            <person name="Gertler C."/>
            <person name="Goesmann A."/>
            <person name="Golyshina O.V."/>
            <person name="Kaminski F."/>
            <person name="Khachane A.N."/>
            <person name="Lang S."/>
            <person name="Linke B."/>
            <person name="McHardy A.C."/>
            <person name="Meyer F."/>
            <person name="Nechitaylo T."/>
            <person name="Puehler A."/>
            <person name="Regenhardt D."/>
            <person name="Rupp O."/>
            <person name="Sabirova J.S."/>
            <person name="Selbitschka W."/>
            <person name="Yakimov M.M."/>
            <person name="Timmis K.N."/>
            <person name="Vorhoelter F.-J."/>
            <person name="Weidner S."/>
            <person name="Kaiser O."/>
            <person name="Golyshin P.N."/>
        </authorList>
    </citation>
    <scope>NUCLEOTIDE SEQUENCE [LARGE SCALE GENOMIC DNA]</scope>
    <source>
        <strain>ATCC 700651 / DSM 11573 / NCIMB 13689 / SK2</strain>
    </source>
</reference>
<feature type="chain" id="PRO_0000340605" description="Sulfate adenylyltransferase">
    <location>
        <begin position="1"/>
        <end position="401"/>
    </location>
</feature>
<proteinExistence type="inferred from homology"/>